<dbReference type="SMR" id="P68109"/>
<dbReference type="Proteomes" id="UP000233100">
    <property type="component" value="Unplaced"/>
</dbReference>
<dbReference type="GO" id="GO:0005576">
    <property type="term" value="C:extracellular region"/>
    <property type="evidence" value="ECO:0007669"/>
    <property type="project" value="UniProtKB-SubCell"/>
</dbReference>
<dbReference type="GO" id="GO:0002250">
    <property type="term" value="P:adaptive immune response"/>
    <property type="evidence" value="ECO:0007669"/>
    <property type="project" value="UniProtKB-KW"/>
</dbReference>
<dbReference type="GO" id="GO:0007596">
    <property type="term" value="P:blood coagulation"/>
    <property type="evidence" value="ECO:0007669"/>
    <property type="project" value="UniProtKB-KW"/>
</dbReference>
<dbReference type="GO" id="GO:0045087">
    <property type="term" value="P:innate immune response"/>
    <property type="evidence" value="ECO:0007669"/>
    <property type="project" value="UniProtKB-KW"/>
</dbReference>
<keyword id="KW-1064">Adaptive immunity</keyword>
<keyword id="KW-0094">Blood coagulation</keyword>
<keyword id="KW-0175">Coiled coil</keyword>
<keyword id="KW-0903">Direct protein sequencing</keyword>
<keyword id="KW-1015">Disulfide bond</keyword>
<keyword id="KW-0356">Hemostasis</keyword>
<keyword id="KW-0391">Immunity</keyword>
<keyword id="KW-0399">Innate immunity</keyword>
<keyword id="KW-1185">Reference proteome</keyword>
<keyword id="KW-0964">Secreted</keyword>
<organism>
    <name type="scientific">Macaca fascicularis</name>
    <name type="common">Crab-eating macaque</name>
    <name type="synonym">Cynomolgus monkey</name>
    <dbReference type="NCBI Taxonomy" id="9541"/>
    <lineage>
        <taxon>Eukaryota</taxon>
        <taxon>Metazoa</taxon>
        <taxon>Chordata</taxon>
        <taxon>Craniata</taxon>
        <taxon>Vertebrata</taxon>
        <taxon>Euteleostomi</taxon>
        <taxon>Mammalia</taxon>
        <taxon>Eutheria</taxon>
        <taxon>Euarchontoglires</taxon>
        <taxon>Primates</taxon>
        <taxon>Haplorrhini</taxon>
        <taxon>Catarrhini</taxon>
        <taxon>Cercopithecidae</taxon>
        <taxon>Cercopithecinae</taxon>
        <taxon>Macaca</taxon>
    </lineage>
</organism>
<sequence length="16" mass="1551">ADTGEGDFLAEGGGVR</sequence>
<accession>P68109</accession>
<accession>P12803</accession>
<evidence type="ECO:0000250" key="1">
    <source>
        <dbReference type="UniProtKB" id="E9PV24"/>
    </source>
</evidence>
<evidence type="ECO:0000250" key="2">
    <source>
        <dbReference type="UniProtKB" id="P02671"/>
    </source>
</evidence>
<comment type="function">
    <text evidence="1">Cleaved by the protease thrombin to yield monomers which, together with fibrinogen beta (FGB) and fibrinogen gamma (FGG), polymerize to form an insoluble fibrin matrix. Fibrin has a major function in hemostasis as one of the primary components of blood clots. In addition, functions during the early stages of wound repair to stabilize the lesion and guide cell migration during re-epithelialization. Was originally thought to be essential for platelet aggregation, based on in vitro studies using anticoagulated blood. However, subsequent studies have shown that it is not absolutely required for thrombus formation in vivo. Enhances expression of SELP in activated platelets via an ITGB3-dependent pathway. Maternal fibrinogen is essential for successful pregnancy. Fibrin deposition is also associated with infection, where it protects against IFNG-mediated hemorrhage. May also facilitate the immune response via both innate and T-cell mediated pathways.</text>
</comment>
<comment type="subunit">
    <text evidence="2">Heterohexamer; disulfide linked. Contains 2 sets of 3 non-identical chains (alpha, beta and gamma). The 2 heterotrimers are in head to head conformation with the N-termini in a small central domain (By similarity).</text>
</comment>
<comment type="subcellular location">
    <subcellularLocation>
        <location>Secreted</location>
    </subcellularLocation>
</comment>
<comment type="domain">
    <text evidence="2">A long coiled coil structure formed by 3 polypeptide chains connects the central nodule to the C-terminal domains (distal nodules). The long C-terminal ends of the alpha chains fold back, contributing a fourth strand to the coiled coil structure.</text>
</comment>
<comment type="PTM">
    <text>Conversion of fibrinogen to fibrin is triggered by thrombin, which cleaves fibrinopeptides A and B from alpha and beta chains, and thus exposes the N-terminal polymerization sites responsible for the formation of the soft clot. The soft clot is converted into the hard clot by factor XIIIA which catalyzes the epsilon-(gamma-glutamyl)lysine cross-linking between gamma chains (stronger) and between alpha chains (weaker) of different monomers.</text>
</comment>
<comment type="PTM">
    <text>Forms F13A-mediated cross-links between a glutamine and the epsilon-amino group of a lysine residue, forming fibronectin-fibrinogen heteropolymers.</text>
</comment>
<feature type="peptide" id="PRO_0000009026" description="Fibrinopeptide A">
    <location>
        <begin position="1"/>
        <end position="16"/>
    </location>
</feature>
<feature type="non-terminal residue">
    <location>
        <position position="16"/>
    </location>
</feature>
<proteinExistence type="evidence at protein level"/>
<name>FIBA_MACFA</name>
<protein>
    <recommendedName>
        <fullName>Fibrinogen alpha chain</fullName>
    </recommendedName>
    <component>
        <recommendedName>
            <fullName>Fibrinopeptide A</fullName>
        </recommendedName>
    </component>
</protein>
<reference key="1">
    <citation type="journal article" date="1965" name="Acta Chem. Scand.">
        <title>Studies on fibrinopeptides from primates.</title>
        <authorList>
            <person name="Blombaeck B."/>
            <person name="Blombaeck M."/>
            <person name="Grondahl N.J."/>
            <person name="Guthrie C."/>
            <person name="Hinton M."/>
        </authorList>
    </citation>
    <scope>PROTEIN SEQUENCE</scope>
</reference>
<gene>
    <name type="primary">FGA</name>
</gene>